<feature type="chain" id="PRO_1000095726" description="Tryptophan synthase alpha chain">
    <location>
        <begin position="1"/>
        <end position="271"/>
    </location>
</feature>
<feature type="active site" description="Proton acceptor" evidence="1">
    <location>
        <position position="49"/>
    </location>
</feature>
<feature type="active site" description="Proton acceptor" evidence="1">
    <location>
        <position position="60"/>
    </location>
</feature>
<dbReference type="EC" id="4.2.1.20" evidence="1"/>
<dbReference type="EMBL" id="CP001013">
    <property type="protein sequence ID" value="ACB33950.1"/>
    <property type="molecule type" value="Genomic_DNA"/>
</dbReference>
<dbReference type="RefSeq" id="WP_012346711.1">
    <property type="nucleotide sequence ID" value="NC_010524.1"/>
</dbReference>
<dbReference type="SMR" id="B1XY49"/>
<dbReference type="STRING" id="395495.Lcho_1683"/>
<dbReference type="KEGG" id="lch:Lcho_1683"/>
<dbReference type="eggNOG" id="COG0159">
    <property type="taxonomic scope" value="Bacteria"/>
</dbReference>
<dbReference type="HOGENOM" id="CLU_016734_0_4_4"/>
<dbReference type="OrthoDB" id="9804578at2"/>
<dbReference type="UniPathway" id="UPA00035">
    <property type="reaction ID" value="UER00044"/>
</dbReference>
<dbReference type="Proteomes" id="UP000001693">
    <property type="component" value="Chromosome"/>
</dbReference>
<dbReference type="GO" id="GO:0005829">
    <property type="term" value="C:cytosol"/>
    <property type="evidence" value="ECO:0007669"/>
    <property type="project" value="TreeGrafter"/>
</dbReference>
<dbReference type="GO" id="GO:0004834">
    <property type="term" value="F:tryptophan synthase activity"/>
    <property type="evidence" value="ECO:0007669"/>
    <property type="project" value="UniProtKB-UniRule"/>
</dbReference>
<dbReference type="CDD" id="cd04724">
    <property type="entry name" value="Tryptophan_synthase_alpha"/>
    <property type="match status" value="1"/>
</dbReference>
<dbReference type="FunFam" id="3.20.20.70:FF:000037">
    <property type="entry name" value="Tryptophan synthase alpha chain"/>
    <property type="match status" value="1"/>
</dbReference>
<dbReference type="Gene3D" id="3.20.20.70">
    <property type="entry name" value="Aldolase class I"/>
    <property type="match status" value="1"/>
</dbReference>
<dbReference type="HAMAP" id="MF_00131">
    <property type="entry name" value="Trp_synth_alpha"/>
    <property type="match status" value="1"/>
</dbReference>
<dbReference type="InterPro" id="IPR013785">
    <property type="entry name" value="Aldolase_TIM"/>
</dbReference>
<dbReference type="InterPro" id="IPR011060">
    <property type="entry name" value="RibuloseP-bd_barrel"/>
</dbReference>
<dbReference type="InterPro" id="IPR018204">
    <property type="entry name" value="Trp_synthase_alpha_AS"/>
</dbReference>
<dbReference type="InterPro" id="IPR002028">
    <property type="entry name" value="Trp_synthase_suA"/>
</dbReference>
<dbReference type="NCBIfam" id="TIGR00262">
    <property type="entry name" value="trpA"/>
    <property type="match status" value="1"/>
</dbReference>
<dbReference type="PANTHER" id="PTHR43406:SF1">
    <property type="entry name" value="TRYPTOPHAN SYNTHASE ALPHA CHAIN, CHLOROPLASTIC"/>
    <property type="match status" value="1"/>
</dbReference>
<dbReference type="PANTHER" id="PTHR43406">
    <property type="entry name" value="TRYPTOPHAN SYNTHASE, ALPHA CHAIN"/>
    <property type="match status" value="1"/>
</dbReference>
<dbReference type="Pfam" id="PF00290">
    <property type="entry name" value="Trp_syntA"/>
    <property type="match status" value="1"/>
</dbReference>
<dbReference type="SUPFAM" id="SSF51366">
    <property type="entry name" value="Ribulose-phoshate binding barrel"/>
    <property type="match status" value="1"/>
</dbReference>
<dbReference type="PROSITE" id="PS00167">
    <property type="entry name" value="TRP_SYNTHASE_ALPHA"/>
    <property type="match status" value="1"/>
</dbReference>
<gene>
    <name evidence="1" type="primary">trpA</name>
    <name type="ordered locus">Lcho_1683</name>
</gene>
<proteinExistence type="inferred from homology"/>
<organism>
    <name type="scientific">Leptothrix cholodnii (strain ATCC 51168 / LMG 8142 / SP-6)</name>
    <name type="common">Leptothrix discophora (strain SP-6)</name>
    <dbReference type="NCBI Taxonomy" id="395495"/>
    <lineage>
        <taxon>Bacteria</taxon>
        <taxon>Pseudomonadati</taxon>
        <taxon>Pseudomonadota</taxon>
        <taxon>Betaproteobacteria</taxon>
        <taxon>Burkholderiales</taxon>
        <taxon>Sphaerotilaceae</taxon>
        <taxon>Leptothrix</taxon>
    </lineage>
</organism>
<keyword id="KW-0028">Amino-acid biosynthesis</keyword>
<keyword id="KW-0057">Aromatic amino acid biosynthesis</keyword>
<keyword id="KW-0456">Lyase</keyword>
<keyword id="KW-1185">Reference proteome</keyword>
<keyword id="KW-0822">Tryptophan biosynthesis</keyword>
<evidence type="ECO:0000255" key="1">
    <source>
        <dbReference type="HAMAP-Rule" id="MF_00131"/>
    </source>
</evidence>
<accession>B1XY49</accession>
<sequence length="271" mass="28752">MSRIAATFARLAGQGRKALIPYVTAGDPFADITVDLMHAMAKAGADVIELGVPFSDPMADGPVIQRASERALSRNISTADVLAMVARFRETDDTTPVVLMGYANPVERYGPDRFVDDARAAGVDGVLVVDYPPQECEAFADRLRAADLDPIFLLAPTSTDARMADVGRIATGYVYYVSLKGVTGSGNLDTDAVARMIPRIRSHVSVPVGVGFGIRDAATAVAVARVSDAVVIGSRIIQLIENEPRERVVPVAAGFIAEIRTALDTLQGTHA</sequence>
<protein>
    <recommendedName>
        <fullName evidence="1">Tryptophan synthase alpha chain</fullName>
        <ecNumber evidence="1">4.2.1.20</ecNumber>
    </recommendedName>
</protein>
<reference key="1">
    <citation type="submission" date="2008-03" db="EMBL/GenBank/DDBJ databases">
        <title>Complete sequence of Leptothrix cholodnii SP-6.</title>
        <authorList>
            <consortium name="US DOE Joint Genome Institute"/>
            <person name="Copeland A."/>
            <person name="Lucas S."/>
            <person name="Lapidus A."/>
            <person name="Glavina del Rio T."/>
            <person name="Dalin E."/>
            <person name="Tice H."/>
            <person name="Bruce D."/>
            <person name="Goodwin L."/>
            <person name="Pitluck S."/>
            <person name="Chertkov O."/>
            <person name="Brettin T."/>
            <person name="Detter J.C."/>
            <person name="Han C."/>
            <person name="Kuske C.R."/>
            <person name="Schmutz J."/>
            <person name="Larimer F."/>
            <person name="Land M."/>
            <person name="Hauser L."/>
            <person name="Kyrpides N."/>
            <person name="Lykidis A."/>
            <person name="Emerson D."/>
            <person name="Richardson P."/>
        </authorList>
    </citation>
    <scope>NUCLEOTIDE SEQUENCE [LARGE SCALE GENOMIC DNA]</scope>
    <source>
        <strain>ATCC 51168 / LMG 8142 / SP-6</strain>
    </source>
</reference>
<name>TRPA_LEPCP</name>
<comment type="function">
    <text evidence="1">The alpha subunit is responsible for the aldol cleavage of indoleglycerol phosphate to indole and glyceraldehyde 3-phosphate.</text>
</comment>
<comment type="catalytic activity">
    <reaction evidence="1">
        <text>(1S,2R)-1-C-(indol-3-yl)glycerol 3-phosphate + L-serine = D-glyceraldehyde 3-phosphate + L-tryptophan + H2O</text>
        <dbReference type="Rhea" id="RHEA:10532"/>
        <dbReference type="ChEBI" id="CHEBI:15377"/>
        <dbReference type="ChEBI" id="CHEBI:33384"/>
        <dbReference type="ChEBI" id="CHEBI:57912"/>
        <dbReference type="ChEBI" id="CHEBI:58866"/>
        <dbReference type="ChEBI" id="CHEBI:59776"/>
        <dbReference type="EC" id="4.2.1.20"/>
    </reaction>
</comment>
<comment type="pathway">
    <text evidence="1">Amino-acid biosynthesis; L-tryptophan biosynthesis; L-tryptophan from chorismate: step 5/5.</text>
</comment>
<comment type="subunit">
    <text evidence="1">Tetramer of two alpha and two beta chains.</text>
</comment>
<comment type="similarity">
    <text evidence="1">Belongs to the TrpA family.</text>
</comment>